<feature type="chain" id="PRO_0000182656" description="Polar flagellin E">
    <location>
        <begin position="1"/>
        <end position="374"/>
    </location>
</feature>
<feature type="coiled-coil region" evidence="1">
    <location>
        <begin position="102"/>
        <end position="126"/>
    </location>
</feature>
<feature type="sequence conflict" description="In Ref. 1; AAD10273." evidence="2" ref="1">
    <original>K</original>
    <variation>T</variation>
    <location>
        <position position="109"/>
    </location>
</feature>
<feature type="sequence conflict" description="In Ref. 1; AAD10273." evidence="2" ref="1">
    <original>A</original>
    <variation>T</variation>
    <location>
        <position position="158"/>
    </location>
</feature>
<feature type="sequence conflict" description="In Ref. 1; AAD10273." evidence="2" ref="1">
    <original>A</original>
    <variation>T</variation>
    <location>
        <position position="203"/>
    </location>
</feature>
<feature type="sequence conflict" description="In Ref. 1; AAD10273." evidence="2" ref="1">
    <original>KV</original>
    <variation>EA</variation>
    <location>
        <begin position="206"/>
        <end position="207"/>
    </location>
</feature>
<feature type="sequence conflict" description="In Ref. 1; AAD10273." evidence="2" ref="1">
    <original>N</original>
    <variation>S</variation>
    <location>
        <position position="215"/>
    </location>
</feature>
<feature type="sequence conflict" description="In Ref. 1; AAD10273." evidence="2" ref="1">
    <original>I</original>
    <variation>V</variation>
    <location>
        <position position="253"/>
    </location>
</feature>
<feature type="sequence conflict" description="In Ref. 1; AAD10273." evidence="2" ref="1">
    <original>G</original>
    <variation>R</variation>
    <location>
        <position position="282"/>
    </location>
</feature>
<feature type="sequence conflict" description="In Ref. 1; AAD10273." evidence="2" ref="1">
    <original>G</original>
    <variation>S</variation>
    <location>
        <position position="289"/>
    </location>
</feature>
<feature type="sequence conflict" description="In Ref. 1; AAD10273." evidence="2" ref="1">
    <original>S</original>
    <variation>L</variation>
    <location>
        <position position="327"/>
    </location>
</feature>
<feature type="sequence conflict" description="In Ref. 1; AAD10273." evidence="2" ref="1">
    <original>V</original>
    <variation>E</variation>
    <location>
        <position position="344"/>
    </location>
</feature>
<evidence type="ECO:0000255" key="1"/>
<evidence type="ECO:0000305" key="2"/>
<proteinExistence type="inferred from homology"/>
<keyword id="KW-0975">Bacterial flagellum</keyword>
<keyword id="KW-0175">Coiled coil</keyword>
<keyword id="KW-0964">Secreted</keyword>
<dbReference type="EMBL" id="U12817">
    <property type="protein sequence ID" value="AAD10273.1"/>
    <property type="molecule type" value="Genomic_DNA"/>
</dbReference>
<dbReference type="EMBL" id="BA000031">
    <property type="protein sequence ID" value="BAC59054.1"/>
    <property type="molecule type" value="Genomic_DNA"/>
</dbReference>
<dbReference type="RefSeq" id="NP_797170.1">
    <property type="nucleotide sequence ID" value="NC_004603.1"/>
</dbReference>
<dbReference type="RefSeq" id="WP_005482232.1">
    <property type="nucleotide sequence ID" value="NC_004603.1"/>
</dbReference>
<dbReference type="SMR" id="Q9ZBA2"/>
<dbReference type="GeneID" id="1188288"/>
<dbReference type="KEGG" id="vpa:VP0791"/>
<dbReference type="PATRIC" id="fig|223926.6.peg.754"/>
<dbReference type="eggNOG" id="COG1344">
    <property type="taxonomic scope" value="Bacteria"/>
</dbReference>
<dbReference type="HOGENOM" id="CLU_011142_4_0_6"/>
<dbReference type="Proteomes" id="UP000002493">
    <property type="component" value="Chromosome 1"/>
</dbReference>
<dbReference type="GO" id="GO:0009288">
    <property type="term" value="C:bacterial-type flagellum"/>
    <property type="evidence" value="ECO:0007669"/>
    <property type="project" value="UniProtKB-SubCell"/>
</dbReference>
<dbReference type="GO" id="GO:0005576">
    <property type="term" value="C:extracellular region"/>
    <property type="evidence" value="ECO:0007669"/>
    <property type="project" value="UniProtKB-SubCell"/>
</dbReference>
<dbReference type="GO" id="GO:0005198">
    <property type="term" value="F:structural molecule activity"/>
    <property type="evidence" value="ECO:0007669"/>
    <property type="project" value="InterPro"/>
</dbReference>
<dbReference type="Gene3D" id="3.30.70.2120">
    <property type="match status" value="1"/>
</dbReference>
<dbReference type="Gene3D" id="1.20.1330.10">
    <property type="entry name" value="f41 fragment of flagellin, N-terminal domain"/>
    <property type="match status" value="1"/>
</dbReference>
<dbReference type="Gene3D" id="6.10.10.10">
    <property type="entry name" value="Flagellar export chaperone, C-terminal domain"/>
    <property type="match status" value="1"/>
</dbReference>
<dbReference type="InterPro" id="IPR001492">
    <property type="entry name" value="Flagellin"/>
</dbReference>
<dbReference type="InterPro" id="IPR046358">
    <property type="entry name" value="Flagellin_C"/>
</dbReference>
<dbReference type="InterPro" id="IPR042187">
    <property type="entry name" value="Flagellin_C_sub2"/>
</dbReference>
<dbReference type="InterPro" id="IPR010810">
    <property type="entry name" value="Flagellin_hook_IN_motif"/>
</dbReference>
<dbReference type="InterPro" id="IPR001029">
    <property type="entry name" value="Flagellin_N"/>
</dbReference>
<dbReference type="NCBIfam" id="NF006466">
    <property type="entry name" value="PRK08869.1-1"/>
    <property type="match status" value="1"/>
</dbReference>
<dbReference type="NCBIfam" id="NF006468">
    <property type="entry name" value="PRK08869.1-3"/>
    <property type="match status" value="1"/>
</dbReference>
<dbReference type="PANTHER" id="PTHR42792">
    <property type="entry name" value="FLAGELLIN"/>
    <property type="match status" value="1"/>
</dbReference>
<dbReference type="PANTHER" id="PTHR42792:SF2">
    <property type="entry name" value="FLAGELLIN"/>
    <property type="match status" value="1"/>
</dbReference>
<dbReference type="Pfam" id="PF00700">
    <property type="entry name" value="Flagellin_C"/>
    <property type="match status" value="1"/>
</dbReference>
<dbReference type="Pfam" id="PF07196">
    <property type="entry name" value="Flagellin_IN"/>
    <property type="match status" value="1"/>
</dbReference>
<dbReference type="Pfam" id="PF00669">
    <property type="entry name" value="Flagellin_N"/>
    <property type="match status" value="1"/>
</dbReference>
<dbReference type="PRINTS" id="PR00207">
    <property type="entry name" value="FLAGELLIN"/>
</dbReference>
<dbReference type="SUPFAM" id="SSF64518">
    <property type="entry name" value="Phase 1 flagellin"/>
    <property type="match status" value="1"/>
</dbReference>
<organism>
    <name type="scientific">Vibrio parahaemolyticus serotype O3:K6 (strain RIMD 2210633)</name>
    <dbReference type="NCBI Taxonomy" id="223926"/>
    <lineage>
        <taxon>Bacteria</taxon>
        <taxon>Pseudomonadati</taxon>
        <taxon>Pseudomonadota</taxon>
        <taxon>Gammaproteobacteria</taxon>
        <taxon>Vibrionales</taxon>
        <taxon>Vibrionaceae</taxon>
        <taxon>Vibrio</taxon>
    </lineage>
</organism>
<reference key="1">
    <citation type="journal article" date="2000" name="J. Bacteriol.">
        <title>Analysis of the polar flagellar gene system of Vibrio parahaemolyticus.</title>
        <authorList>
            <person name="Kim Y.-K."/>
            <person name="McCarter L.L."/>
        </authorList>
    </citation>
    <scope>NUCLEOTIDE SEQUENCE [GENOMIC DNA]</scope>
    <source>
        <strain>BB22</strain>
    </source>
</reference>
<reference key="2">
    <citation type="journal article" date="2003" name="Lancet">
        <title>Genome sequence of Vibrio parahaemolyticus: a pathogenic mechanism distinct from that of V. cholerae.</title>
        <authorList>
            <person name="Makino K."/>
            <person name="Oshima K."/>
            <person name="Kurokawa K."/>
            <person name="Yokoyama K."/>
            <person name="Uda T."/>
            <person name="Tagomori K."/>
            <person name="Iijima Y."/>
            <person name="Najima M."/>
            <person name="Nakano M."/>
            <person name="Yamashita A."/>
            <person name="Kubota Y."/>
            <person name="Kimura S."/>
            <person name="Yasunaga T."/>
            <person name="Honda T."/>
            <person name="Shinagawa H."/>
            <person name="Hattori M."/>
            <person name="Iida T."/>
        </authorList>
    </citation>
    <scope>NUCLEOTIDE SEQUENCE [LARGE SCALE GENOMIC DNA]</scope>
    <source>
        <strain>RIMD 2210633</strain>
    </source>
</reference>
<comment type="function">
    <text>Flagellin is the subunit protein which polymerizes to form the filaments of bacterial flagella.</text>
</comment>
<comment type="subunit">
    <text>Heteromer of multiple flagellin subunits including FlaA, FlaB/D, FlaC, FlaE and FlaF.</text>
</comment>
<comment type="subcellular location">
    <subcellularLocation>
        <location>Secreted</location>
    </subcellularLocation>
    <subcellularLocation>
        <location>Bacterial flagellum</location>
    </subcellularLocation>
</comment>
<comment type="miscellaneous">
    <text>V.parahaemolyticus possesses two flagellar systems: a single polar flagellum propels the bacterium in liquid (swimming), while multiple lateral (peritrichous) flagella move the bacterium over surfaces (swarming). The polar flagellum is synthesized constitutively but lateral flagella are produced only under conditions in which the polar flagellum is not functional.</text>
</comment>
<comment type="similarity">
    <text evidence="2">Belongs to the bacterial flagellin family.</text>
</comment>
<protein>
    <recommendedName>
        <fullName>Polar flagellin E</fullName>
    </recommendedName>
</protein>
<sequence>MVSLNTNVAAMMTQRHLSQAADQNVESQRNLSSGYRINSASDDAAGLQISNTLHVQTRGIDVALRNAHDAYSVAQTAEGALHESSDILQRLRSLGLQAANGSHEQDDRKSLQQEVIALQDELDRVAITTTFADKNLFNGSYGSQSFHIGANANSISLALRNMRTHIPEMGGQHYLGDSLDKDWRVTRDNQQFAFEYQDNEGQAQSKVLTLKVGDNLEEVATYINAQQSVVDASVTQDHQLQFFTSTLNAPEGITWKGNFADEMDIGSGELVTVDDLDMSTVGGAQLAIGVVDAAIKYVDSHRSEIGGFQNRVSGTIDNLNTINRSVSESKGRIRDTDFARESTVMVRSQVLQDATTALLAQAKQRPSSALGLLS</sequence>
<name>FLAE_VIBPA</name>
<gene>
    <name type="primary">flaE</name>
    <name type="ordered locus">VP0791</name>
</gene>
<accession>Q9ZBA2</accession>